<organism>
    <name type="scientific">Escherichia coli O45:K1 (strain S88 / ExPEC)</name>
    <dbReference type="NCBI Taxonomy" id="585035"/>
    <lineage>
        <taxon>Bacteria</taxon>
        <taxon>Pseudomonadati</taxon>
        <taxon>Pseudomonadota</taxon>
        <taxon>Gammaproteobacteria</taxon>
        <taxon>Enterobacterales</taxon>
        <taxon>Enterobacteriaceae</taxon>
        <taxon>Escherichia</taxon>
    </lineage>
</organism>
<proteinExistence type="inferred from homology"/>
<comment type="function">
    <text evidence="1">Pore-forming subunit of a potassium efflux system that confers protection against electrophiles. Catalyzes K(+)/H(+) antiport.</text>
</comment>
<comment type="subunit">
    <text evidence="1">Interacts with the regulatory subunit KefG.</text>
</comment>
<comment type="subcellular location">
    <subcellularLocation>
        <location evidence="1">Cell inner membrane</location>
        <topology evidence="1">Multi-pass membrane protein</topology>
    </subcellularLocation>
</comment>
<comment type="similarity">
    <text evidence="1">Belongs to the monovalent cation:proton antiporter 2 (CPA2) transporter (TC 2.A.37) family. KefB subfamily.</text>
</comment>
<protein>
    <recommendedName>
        <fullName evidence="1">Glutathione-regulated potassium-efflux system protein KefB</fullName>
    </recommendedName>
    <alternativeName>
        <fullName evidence="1">K(+)/H(+) antiporter</fullName>
    </alternativeName>
</protein>
<reference key="1">
    <citation type="journal article" date="2009" name="PLoS Genet.">
        <title>Organised genome dynamics in the Escherichia coli species results in highly diverse adaptive paths.</title>
        <authorList>
            <person name="Touchon M."/>
            <person name="Hoede C."/>
            <person name="Tenaillon O."/>
            <person name="Barbe V."/>
            <person name="Baeriswyl S."/>
            <person name="Bidet P."/>
            <person name="Bingen E."/>
            <person name="Bonacorsi S."/>
            <person name="Bouchier C."/>
            <person name="Bouvet O."/>
            <person name="Calteau A."/>
            <person name="Chiapello H."/>
            <person name="Clermont O."/>
            <person name="Cruveiller S."/>
            <person name="Danchin A."/>
            <person name="Diard M."/>
            <person name="Dossat C."/>
            <person name="Karoui M.E."/>
            <person name="Frapy E."/>
            <person name="Garry L."/>
            <person name="Ghigo J.M."/>
            <person name="Gilles A.M."/>
            <person name="Johnson J."/>
            <person name="Le Bouguenec C."/>
            <person name="Lescat M."/>
            <person name="Mangenot S."/>
            <person name="Martinez-Jehanne V."/>
            <person name="Matic I."/>
            <person name="Nassif X."/>
            <person name="Oztas S."/>
            <person name="Petit M.A."/>
            <person name="Pichon C."/>
            <person name="Rouy Z."/>
            <person name="Ruf C.S."/>
            <person name="Schneider D."/>
            <person name="Tourret J."/>
            <person name="Vacherie B."/>
            <person name="Vallenet D."/>
            <person name="Medigue C."/>
            <person name="Rocha E.P.C."/>
            <person name="Denamur E."/>
        </authorList>
    </citation>
    <scope>NUCLEOTIDE SEQUENCE [LARGE SCALE GENOMIC DNA]</scope>
    <source>
        <strain>S88 / ExPEC</strain>
    </source>
</reference>
<sequence length="601" mass="66463">MEGSDFLLAGVLFLFAAVAAVPLASRLGIGAVLGYLLAGIAIGPWGLGFISDVDEILHFSELGVVFLMFIIGLELNPSKLWQLRRSIFGVGAAQVLLSAALLAGLLMLTHFSWQAAVVGGIGLAMSSTAMALQLMREKGMNRSESGQLGFSVLLFQDLAVIPALALVPLLAGSADEHFDWMKIGMKVLAFVGMLIGGRYLLRPVFRFIAASGVREVFTAATLLLVLGSALFMDALGLSMALGTFIAGVLLAESEYRHELETAIDPFKGLLLGLFFISVGMSLNLGVLYTHLLWVVISVVVLVAVKILVLYLLARLYGVRSSERMQFAGVLSQGGEFAFVLFSTASSQRLFQGDQMALLLVTVTLSMMTTPLLMKLVDKWLSRQFNGPEEEDEKPWVNDDKPQVIVVGFGRFGQVIGRLLMANKMRITVLERDISAVNLMRKYGYKVYYGDATQVDLLRSAGAEAAESIVITCNEPEDTMKLVEICQQHFPHLHILARARGRVEAHELLQAGVTQFSRETFSSALELGRKTLVTLGMHPHQAQRAQLHFRRLDMRMLRELIPMHADTVQISRAREARRELEEIFQREMQQERRQLDGWDEFE</sequence>
<keyword id="KW-0050">Antiport</keyword>
<keyword id="KW-0997">Cell inner membrane</keyword>
<keyword id="KW-1003">Cell membrane</keyword>
<keyword id="KW-0406">Ion transport</keyword>
<keyword id="KW-0472">Membrane</keyword>
<keyword id="KW-0630">Potassium</keyword>
<keyword id="KW-0633">Potassium transport</keyword>
<keyword id="KW-1185">Reference proteome</keyword>
<keyword id="KW-0812">Transmembrane</keyword>
<keyword id="KW-1133">Transmembrane helix</keyword>
<keyword id="KW-0813">Transport</keyword>
<gene>
    <name evidence="1" type="primary">kefB</name>
    <name type="ordered locus">ECS88_3739</name>
</gene>
<dbReference type="EMBL" id="CU928161">
    <property type="protein sequence ID" value="CAR04955.1"/>
    <property type="molecule type" value="Genomic_DNA"/>
</dbReference>
<dbReference type="RefSeq" id="WP_000399162.1">
    <property type="nucleotide sequence ID" value="NC_011742.1"/>
</dbReference>
<dbReference type="SMR" id="B7MCW6"/>
<dbReference type="KEGG" id="ecz:ECS88_3739"/>
<dbReference type="HOGENOM" id="CLU_005126_9_3_6"/>
<dbReference type="Proteomes" id="UP000000747">
    <property type="component" value="Chromosome"/>
</dbReference>
<dbReference type="GO" id="GO:0005886">
    <property type="term" value="C:plasma membrane"/>
    <property type="evidence" value="ECO:0007669"/>
    <property type="project" value="UniProtKB-SubCell"/>
</dbReference>
<dbReference type="GO" id="GO:0015503">
    <property type="term" value="F:glutathione-regulated potassium exporter activity"/>
    <property type="evidence" value="ECO:0007669"/>
    <property type="project" value="UniProtKB-UniRule"/>
</dbReference>
<dbReference type="GO" id="GO:1902600">
    <property type="term" value="P:proton transmembrane transport"/>
    <property type="evidence" value="ECO:0007669"/>
    <property type="project" value="InterPro"/>
</dbReference>
<dbReference type="FunFam" id="1.20.1530.20:FF:000001">
    <property type="entry name" value="Glutathione-regulated potassium-efflux system protein KefB"/>
    <property type="match status" value="1"/>
</dbReference>
<dbReference type="FunFam" id="3.40.50.720:FF:000036">
    <property type="entry name" value="Glutathione-regulated potassium-efflux system protein KefB"/>
    <property type="match status" value="1"/>
</dbReference>
<dbReference type="Gene3D" id="1.20.1530.20">
    <property type="match status" value="1"/>
</dbReference>
<dbReference type="Gene3D" id="3.40.50.720">
    <property type="entry name" value="NAD(P)-binding Rossmann-like Domain"/>
    <property type="match status" value="1"/>
</dbReference>
<dbReference type="HAMAP" id="MF_01412">
    <property type="entry name" value="K_H_efflux_KefB"/>
    <property type="match status" value="1"/>
</dbReference>
<dbReference type="InterPro" id="IPR006153">
    <property type="entry name" value="Cation/H_exchanger_TM"/>
</dbReference>
<dbReference type="InterPro" id="IPR004771">
    <property type="entry name" value="K/H_exchanger"/>
</dbReference>
<dbReference type="InterPro" id="IPR020884">
    <property type="entry name" value="K_H_efflux_KefB"/>
</dbReference>
<dbReference type="InterPro" id="IPR038770">
    <property type="entry name" value="Na+/solute_symporter_sf"/>
</dbReference>
<dbReference type="InterPro" id="IPR036291">
    <property type="entry name" value="NAD(P)-bd_dom_sf"/>
</dbReference>
<dbReference type="InterPro" id="IPR003148">
    <property type="entry name" value="RCK_N"/>
</dbReference>
<dbReference type="NCBIfam" id="TIGR00932">
    <property type="entry name" value="2a37"/>
    <property type="match status" value="1"/>
</dbReference>
<dbReference type="NCBIfam" id="NF002973">
    <property type="entry name" value="PRK03659.1"/>
    <property type="match status" value="1"/>
</dbReference>
<dbReference type="PANTHER" id="PTHR46157">
    <property type="entry name" value="K(+) EFFLUX ANTIPORTER 3, CHLOROPLASTIC"/>
    <property type="match status" value="1"/>
</dbReference>
<dbReference type="PANTHER" id="PTHR46157:SF4">
    <property type="entry name" value="K(+) EFFLUX ANTIPORTER 3, CHLOROPLASTIC"/>
    <property type="match status" value="1"/>
</dbReference>
<dbReference type="Pfam" id="PF00999">
    <property type="entry name" value="Na_H_Exchanger"/>
    <property type="match status" value="1"/>
</dbReference>
<dbReference type="Pfam" id="PF02254">
    <property type="entry name" value="TrkA_N"/>
    <property type="match status" value="1"/>
</dbReference>
<dbReference type="SUPFAM" id="SSF51735">
    <property type="entry name" value="NAD(P)-binding Rossmann-fold domains"/>
    <property type="match status" value="1"/>
</dbReference>
<dbReference type="PROSITE" id="PS51201">
    <property type="entry name" value="RCK_N"/>
    <property type="match status" value="1"/>
</dbReference>
<evidence type="ECO:0000255" key="1">
    <source>
        <dbReference type="HAMAP-Rule" id="MF_01412"/>
    </source>
</evidence>
<evidence type="ECO:0000255" key="2">
    <source>
        <dbReference type="PROSITE-ProRule" id="PRU00543"/>
    </source>
</evidence>
<accession>B7MCW6</accession>
<feature type="chain" id="PRO_1000145516" description="Glutathione-regulated potassium-efflux system protein KefB">
    <location>
        <begin position="1"/>
        <end position="601"/>
    </location>
</feature>
<feature type="transmembrane region" description="Helical" evidence="1">
    <location>
        <begin position="4"/>
        <end position="24"/>
    </location>
</feature>
<feature type="transmembrane region" description="Helical" evidence="1">
    <location>
        <begin position="29"/>
        <end position="49"/>
    </location>
</feature>
<feature type="transmembrane region" description="Helical" evidence="1">
    <location>
        <begin position="55"/>
        <end position="75"/>
    </location>
</feature>
<feature type="transmembrane region" description="Helical" evidence="1">
    <location>
        <begin position="87"/>
        <end position="107"/>
    </location>
</feature>
<feature type="transmembrane region" description="Helical" evidence="1">
    <location>
        <begin position="115"/>
        <end position="135"/>
    </location>
</feature>
<feature type="transmembrane region" description="Helical" evidence="1">
    <location>
        <begin position="152"/>
        <end position="172"/>
    </location>
</feature>
<feature type="transmembrane region" description="Helical" evidence="1">
    <location>
        <begin position="177"/>
        <end position="197"/>
    </location>
</feature>
<feature type="transmembrane region" description="Helical" evidence="1">
    <location>
        <begin position="207"/>
        <end position="227"/>
    </location>
</feature>
<feature type="transmembrane region" description="Helical" evidence="1">
    <location>
        <begin position="230"/>
        <end position="250"/>
    </location>
</feature>
<feature type="transmembrane region" description="Helical" evidence="1">
    <location>
        <begin position="268"/>
        <end position="288"/>
    </location>
</feature>
<feature type="transmembrane region" description="Helical" evidence="1">
    <location>
        <begin position="291"/>
        <end position="311"/>
    </location>
</feature>
<feature type="transmembrane region" description="Helical" evidence="1">
    <location>
        <begin position="324"/>
        <end position="344"/>
    </location>
</feature>
<feature type="transmembrane region" description="Helical" evidence="1">
    <location>
        <begin position="356"/>
        <end position="376"/>
    </location>
</feature>
<feature type="domain" description="RCK N-terminal" evidence="2">
    <location>
        <begin position="400"/>
        <end position="519"/>
    </location>
</feature>
<name>KEFB_ECO45</name>